<comment type="PTM">
    <text evidence="2">Phosphorylated at C-terminal serines.</text>
</comment>
<proteinExistence type="evidence at protein level"/>
<sequence>MWTPPRNDQQYLNWQWYSSILSSHAAMCGCPDAVAHFNHLASVLRAPQNPPPPGPQRNLPLRRLPALPAAPEAPGDRAPWPMAGGAEGEDGGAGGDADHGGAAGGPEDADLLDAVAAAETLLEIPAKKPTPRAIESLEAYKSLTRNTTHRNSHSIPGTSDVASLARKLFRECNNNQQLLTFFQQAARDPGGTPRCTTPAKKGSKKKAYFSPQSSSSDESPRGKTRSRRKAGRKAQRKRRRPSPSSSSSSCSNSESWESNSDSCSTKSKKSTKIKISTLPCYQGGGI</sequence>
<evidence type="ECO:0000256" key="1">
    <source>
        <dbReference type="SAM" id="MobiDB-lite"/>
    </source>
</evidence>
<evidence type="ECO:0000269" key="2">
    <source>
    </source>
</evidence>
<feature type="chain" id="PRO_0000317777" description="Probable protein VP2">
    <location>
        <begin position="1"/>
        <end position="286"/>
    </location>
</feature>
<feature type="region of interest" description="Disordered" evidence="1">
    <location>
        <begin position="67"/>
        <end position="108"/>
    </location>
</feature>
<feature type="region of interest" description="Disordered" evidence="1">
    <location>
        <begin position="184"/>
        <end position="286"/>
    </location>
</feature>
<feature type="compositionally biased region" description="Basic residues" evidence="1">
    <location>
        <begin position="222"/>
        <end position="241"/>
    </location>
</feature>
<feature type="compositionally biased region" description="Low complexity" evidence="1">
    <location>
        <begin position="242"/>
        <end position="265"/>
    </location>
</feature>
<keyword id="KW-0597">Phosphoprotein</keyword>
<keyword id="KW-1185">Reference proteome</keyword>
<gene>
    <name type="ORF">ORF2/3</name>
</gene>
<protein>
    <recommendedName>
        <fullName>Probable protein VP2</fullName>
    </recommendedName>
    <alternativeName>
        <fullName>ORF2/3 protein</fullName>
    </alternativeName>
</protein>
<reference key="1">
    <citation type="journal article" date="1999" name="J. Virol.">
        <title>Quasispecies of TT virus (TTV) with sequence divergence in hypervariable regions of the capsid protein in chronic TTV infection.</title>
        <authorList>
            <person name="Nishizawa T."/>
            <person name="Okamoto H."/>
            <person name="Tsuda F."/>
            <person name="Aikawa T."/>
            <person name="Sugai Y."/>
            <person name="Konishi K."/>
            <person name="Akahane Y."/>
            <person name="Ukita M."/>
            <person name="Tanaka T."/>
            <person name="Miyakawa Y."/>
            <person name="Mayumi M."/>
        </authorList>
    </citation>
    <scope>NUCLEOTIDE SEQUENCE [GENOMIC DNA]</scope>
</reference>
<reference key="2">
    <citation type="journal article" date="2001" name="Biochem. Biophys. Res. Commun.">
        <title>Phosphorylation of serine-rich protein encoded by open reading frame 3 of the TT virus genome.</title>
        <authorList>
            <person name="Asabe S."/>
            <person name="Nishizawa T."/>
            <person name="Iwanari H."/>
            <person name="Okamoto H."/>
        </authorList>
    </citation>
    <scope>PHOSPHORYLATION</scope>
</reference>
<reference key="3">
    <citation type="journal article" date="2007" name="Rev. Med. Virol.">
        <title>Torque teno virus (TTV): current status.</title>
        <authorList>
            <person name="Hino S."/>
            <person name="Miyata H."/>
        </authorList>
    </citation>
    <scope>REVIEW</scope>
</reference>
<dbReference type="EMBL" id="AB026346">
    <property type="status" value="NOT_ANNOTATED_CDS"/>
    <property type="molecule type" value="Genomic_DNA"/>
</dbReference>
<dbReference type="EMBL" id="AB026347">
    <property type="status" value="NOT_ANNOTATED_CDS"/>
    <property type="molecule type" value="Genomic_DNA"/>
</dbReference>
<dbReference type="Proteomes" id="UP000008256">
    <property type="component" value="Genome"/>
</dbReference>
<dbReference type="InterPro" id="IPR008474">
    <property type="entry name" value="DUF755"/>
</dbReference>
<dbReference type="InterPro" id="IPR004118">
    <property type="entry name" value="HEV_TT_vir_Orf2/Gyrovir_Vp2_N"/>
</dbReference>
<dbReference type="Pfam" id="PF05501">
    <property type="entry name" value="DUF755"/>
    <property type="match status" value="1"/>
</dbReference>
<dbReference type="Pfam" id="PF02957">
    <property type="entry name" value="TT_ORF2-like"/>
    <property type="match status" value="1"/>
</dbReference>
<name>ORF23_TTVV2</name>
<organismHost>
    <name type="scientific">Homo sapiens</name>
    <name type="common">Human</name>
    <dbReference type="NCBI Taxonomy" id="9606"/>
</organismHost>
<organism>
    <name type="scientific">Torque teno virus (isolate Human/Japan/TRM1/1999)</name>
    <name type="common">TTV</name>
    <name type="synonym">Torque teno virus genotype 1a</name>
    <dbReference type="NCBI Taxonomy" id="486275"/>
    <lineage>
        <taxon>Viruses</taxon>
        <taxon>Viruses incertae sedis</taxon>
        <taxon>Anelloviridae</taxon>
        <taxon>Torque teno virus</taxon>
    </lineage>
</organism>
<accession>P0C674</accession>